<proteinExistence type="inferred from homology"/>
<organism>
    <name type="scientific">Microcystis aeruginosa (strain NIES-843 / IAM M-2473)</name>
    <dbReference type="NCBI Taxonomy" id="449447"/>
    <lineage>
        <taxon>Bacteria</taxon>
        <taxon>Bacillati</taxon>
        <taxon>Cyanobacteriota</taxon>
        <taxon>Cyanophyceae</taxon>
        <taxon>Oscillatoriophycideae</taxon>
        <taxon>Chroococcales</taxon>
        <taxon>Microcystaceae</taxon>
        <taxon>Microcystis</taxon>
    </lineage>
</organism>
<dbReference type="EMBL" id="AP009552">
    <property type="protein sequence ID" value="BAG03481.1"/>
    <property type="molecule type" value="Genomic_DNA"/>
</dbReference>
<dbReference type="RefSeq" id="WP_002738040.1">
    <property type="nucleotide sequence ID" value="NC_010296.1"/>
</dbReference>
<dbReference type="SMR" id="B0JNQ1"/>
<dbReference type="STRING" id="449447.MAE_36590"/>
<dbReference type="PaxDb" id="449447-MAE_36590"/>
<dbReference type="EnsemblBacteria" id="BAG03481">
    <property type="protein sequence ID" value="BAG03481"/>
    <property type="gene ID" value="MAE_36590"/>
</dbReference>
<dbReference type="GeneID" id="66707053"/>
<dbReference type="KEGG" id="mar:MAE_36590"/>
<dbReference type="eggNOG" id="COG0335">
    <property type="taxonomic scope" value="Bacteria"/>
</dbReference>
<dbReference type="HOGENOM" id="CLU_103507_2_0_3"/>
<dbReference type="BioCyc" id="MAER449447:MAE_RS15840-MONOMER"/>
<dbReference type="Proteomes" id="UP000001510">
    <property type="component" value="Chromosome"/>
</dbReference>
<dbReference type="GO" id="GO:0022625">
    <property type="term" value="C:cytosolic large ribosomal subunit"/>
    <property type="evidence" value="ECO:0007669"/>
    <property type="project" value="TreeGrafter"/>
</dbReference>
<dbReference type="GO" id="GO:0003735">
    <property type="term" value="F:structural constituent of ribosome"/>
    <property type="evidence" value="ECO:0007669"/>
    <property type="project" value="InterPro"/>
</dbReference>
<dbReference type="GO" id="GO:0006412">
    <property type="term" value="P:translation"/>
    <property type="evidence" value="ECO:0007669"/>
    <property type="project" value="UniProtKB-UniRule"/>
</dbReference>
<dbReference type="FunFam" id="2.30.30.790:FF:000001">
    <property type="entry name" value="50S ribosomal protein L19"/>
    <property type="match status" value="1"/>
</dbReference>
<dbReference type="Gene3D" id="2.30.30.790">
    <property type="match status" value="1"/>
</dbReference>
<dbReference type="HAMAP" id="MF_00402">
    <property type="entry name" value="Ribosomal_bL19"/>
    <property type="match status" value="1"/>
</dbReference>
<dbReference type="InterPro" id="IPR001857">
    <property type="entry name" value="Ribosomal_bL19"/>
</dbReference>
<dbReference type="InterPro" id="IPR018257">
    <property type="entry name" value="Ribosomal_bL19_CS"/>
</dbReference>
<dbReference type="InterPro" id="IPR038657">
    <property type="entry name" value="Ribosomal_bL19_sf"/>
</dbReference>
<dbReference type="InterPro" id="IPR008991">
    <property type="entry name" value="Translation_prot_SH3-like_sf"/>
</dbReference>
<dbReference type="NCBIfam" id="TIGR01024">
    <property type="entry name" value="rplS_bact"/>
    <property type="match status" value="1"/>
</dbReference>
<dbReference type="PANTHER" id="PTHR15680:SF9">
    <property type="entry name" value="LARGE RIBOSOMAL SUBUNIT PROTEIN BL19M"/>
    <property type="match status" value="1"/>
</dbReference>
<dbReference type="PANTHER" id="PTHR15680">
    <property type="entry name" value="RIBOSOMAL PROTEIN L19"/>
    <property type="match status" value="1"/>
</dbReference>
<dbReference type="Pfam" id="PF01245">
    <property type="entry name" value="Ribosomal_L19"/>
    <property type="match status" value="1"/>
</dbReference>
<dbReference type="PIRSF" id="PIRSF002191">
    <property type="entry name" value="Ribosomal_L19"/>
    <property type="match status" value="1"/>
</dbReference>
<dbReference type="PRINTS" id="PR00061">
    <property type="entry name" value="RIBOSOMALL19"/>
</dbReference>
<dbReference type="SUPFAM" id="SSF50104">
    <property type="entry name" value="Translation proteins SH3-like domain"/>
    <property type="match status" value="1"/>
</dbReference>
<dbReference type="PROSITE" id="PS01015">
    <property type="entry name" value="RIBOSOMAL_L19"/>
    <property type="match status" value="1"/>
</dbReference>
<accession>B0JNQ1</accession>
<evidence type="ECO:0000255" key="1">
    <source>
        <dbReference type="HAMAP-Rule" id="MF_00402"/>
    </source>
</evidence>
<evidence type="ECO:0000305" key="2"/>
<comment type="function">
    <text evidence="1">This protein is located at the 30S-50S ribosomal subunit interface and may play a role in the structure and function of the aminoacyl-tRNA binding site.</text>
</comment>
<comment type="similarity">
    <text evidence="1">Belongs to the bacterial ribosomal protein bL19 family.</text>
</comment>
<feature type="chain" id="PRO_1000080358" description="Large ribosomal subunit protein bL19">
    <location>
        <begin position="1"/>
        <end position="120"/>
    </location>
</feature>
<sequence length="120" mass="13846">MKTEEIIKSIEAEYLKSDLPIIHVGDTIRVGVRIVEGDKERIQPYEGIVIAKRHGGINETITVRKVFQGVGVERVFLLHSPRVASIKIIRRGKVRRAKLYYLRDRVGKATRVQERFDRPL</sequence>
<keyword id="KW-0687">Ribonucleoprotein</keyword>
<keyword id="KW-0689">Ribosomal protein</keyword>
<reference key="1">
    <citation type="journal article" date="2007" name="DNA Res.">
        <title>Complete genomic structure of the bloom-forming toxic cyanobacterium Microcystis aeruginosa NIES-843.</title>
        <authorList>
            <person name="Kaneko T."/>
            <person name="Nakajima N."/>
            <person name="Okamoto S."/>
            <person name="Suzuki I."/>
            <person name="Tanabe Y."/>
            <person name="Tamaoki M."/>
            <person name="Nakamura Y."/>
            <person name="Kasai F."/>
            <person name="Watanabe A."/>
            <person name="Kawashima K."/>
            <person name="Kishida Y."/>
            <person name="Ono A."/>
            <person name="Shimizu Y."/>
            <person name="Takahashi C."/>
            <person name="Minami C."/>
            <person name="Fujishiro T."/>
            <person name="Kohara M."/>
            <person name="Katoh M."/>
            <person name="Nakazaki N."/>
            <person name="Nakayama S."/>
            <person name="Yamada M."/>
            <person name="Tabata S."/>
            <person name="Watanabe M.M."/>
        </authorList>
    </citation>
    <scope>NUCLEOTIDE SEQUENCE [LARGE SCALE GENOMIC DNA]</scope>
    <source>
        <strain>NIES-843 / IAM M-247</strain>
    </source>
</reference>
<gene>
    <name evidence="1" type="primary">rplS</name>
    <name evidence="1" type="synonym">rpl19</name>
    <name type="ordered locus">MAE_36590</name>
</gene>
<name>RL19_MICAN</name>
<protein>
    <recommendedName>
        <fullName evidence="1">Large ribosomal subunit protein bL19</fullName>
    </recommendedName>
    <alternativeName>
        <fullName evidence="2">50S ribosomal protein L19</fullName>
    </alternativeName>
</protein>